<organism>
    <name type="scientific">Chlorokybus atmophyticus</name>
    <name type="common">Soil alga</name>
    <dbReference type="NCBI Taxonomy" id="3144"/>
    <lineage>
        <taxon>Eukaryota</taxon>
        <taxon>Viridiplantae</taxon>
        <taxon>Streptophyta</taxon>
        <taxon>Chlorokybophyceae</taxon>
        <taxon>Chlorokybales</taxon>
        <taxon>Chlorokybaceae</taxon>
        <taxon>Chlorokybus</taxon>
    </lineage>
</organism>
<reference key="1">
    <citation type="journal article" date="2007" name="BMC Biol.">
        <title>A clade uniting the green algae Mesostigma viride and Chlorokybus atmophyticus represents the deepest branch of the Streptophyta in chloroplast genome-based phylogenies.</title>
        <authorList>
            <person name="Lemieux C."/>
            <person name="Otis C."/>
            <person name="Turmel M."/>
        </authorList>
    </citation>
    <scope>NUCLEOTIDE SEQUENCE [LARGE SCALE GENOMIC DNA]</scope>
    <source>
        <strain>SAG 48.80</strain>
    </source>
</reference>
<name>RPOA_CHLAT</name>
<protein>
    <recommendedName>
        <fullName evidence="1">DNA-directed RNA polymerase subunit alpha</fullName>
        <shortName evidence="1">PEP</shortName>
        <ecNumber evidence="1">2.7.7.6</ecNumber>
    </recommendedName>
    <alternativeName>
        <fullName evidence="1">Plastid-encoded RNA polymerase subunit alpha</fullName>
        <shortName evidence="1">RNA polymerase subunit alpha</shortName>
    </alternativeName>
</protein>
<gene>
    <name evidence="1" type="primary">rpoA</name>
</gene>
<dbReference type="EC" id="2.7.7.6" evidence="1"/>
<dbReference type="EMBL" id="DQ422812">
    <property type="protein sequence ID" value="ABM87965.1"/>
    <property type="molecule type" value="Genomic_DNA"/>
</dbReference>
<dbReference type="RefSeq" id="YP_001019081.1">
    <property type="nucleotide sequence ID" value="NC_008822.1"/>
</dbReference>
<dbReference type="SMR" id="A2CI44"/>
<dbReference type="GeneID" id="4783310"/>
<dbReference type="GO" id="GO:0009507">
    <property type="term" value="C:chloroplast"/>
    <property type="evidence" value="ECO:0007669"/>
    <property type="project" value="UniProtKB-SubCell"/>
</dbReference>
<dbReference type="GO" id="GO:0000428">
    <property type="term" value="C:DNA-directed RNA polymerase complex"/>
    <property type="evidence" value="ECO:0007669"/>
    <property type="project" value="UniProtKB-KW"/>
</dbReference>
<dbReference type="GO" id="GO:0005739">
    <property type="term" value="C:mitochondrion"/>
    <property type="evidence" value="ECO:0007669"/>
    <property type="project" value="GOC"/>
</dbReference>
<dbReference type="GO" id="GO:0003677">
    <property type="term" value="F:DNA binding"/>
    <property type="evidence" value="ECO:0007669"/>
    <property type="project" value="UniProtKB-UniRule"/>
</dbReference>
<dbReference type="GO" id="GO:0003899">
    <property type="term" value="F:DNA-directed RNA polymerase activity"/>
    <property type="evidence" value="ECO:0007669"/>
    <property type="project" value="UniProtKB-UniRule"/>
</dbReference>
<dbReference type="GO" id="GO:0046983">
    <property type="term" value="F:protein dimerization activity"/>
    <property type="evidence" value="ECO:0007669"/>
    <property type="project" value="InterPro"/>
</dbReference>
<dbReference type="GO" id="GO:0006351">
    <property type="term" value="P:DNA-templated transcription"/>
    <property type="evidence" value="ECO:0007669"/>
    <property type="project" value="UniProtKB-UniRule"/>
</dbReference>
<dbReference type="CDD" id="cd06928">
    <property type="entry name" value="RNAP_alpha_NTD"/>
    <property type="match status" value="1"/>
</dbReference>
<dbReference type="FunFam" id="2.170.120.12:FF:000001">
    <property type="entry name" value="DNA-directed RNA polymerase subunit alpha"/>
    <property type="match status" value="1"/>
</dbReference>
<dbReference type="Gene3D" id="1.10.150.20">
    <property type="entry name" value="5' to 3' exonuclease, C-terminal subdomain"/>
    <property type="match status" value="1"/>
</dbReference>
<dbReference type="Gene3D" id="2.170.120.12">
    <property type="entry name" value="DNA-directed RNA polymerase, insert domain"/>
    <property type="match status" value="1"/>
</dbReference>
<dbReference type="Gene3D" id="3.30.1360.10">
    <property type="entry name" value="RNA polymerase, RBP11-like subunit"/>
    <property type="match status" value="1"/>
</dbReference>
<dbReference type="HAMAP" id="MF_00059">
    <property type="entry name" value="RNApol_bact_RpoA"/>
    <property type="match status" value="1"/>
</dbReference>
<dbReference type="InterPro" id="IPR011262">
    <property type="entry name" value="DNA-dir_RNA_pol_insert"/>
</dbReference>
<dbReference type="InterPro" id="IPR011263">
    <property type="entry name" value="DNA-dir_RNA_pol_RpoA/D/Rpb3"/>
</dbReference>
<dbReference type="InterPro" id="IPR011773">
    <property type="entry name" value="DNA-dir_RpoA"/>
</dbReference>
<dbReference type="InterPro" id="IPR036603">
    <property type="entry name" value="RBP11-like"/>
</dbReference>
<dbReference type="InterPro" id="IPR011260">
    <property type="entry name" value="RNAP_asu_C"/>
</dbReference>
<dbReference type="InterPro" id="IPR036643">
    <property type="entry name" value="RNApol_insert_sf"/>
</dbReference>
<dbReference type="NCBIfam" id="NF003516">
    <property type="entry name" value="PRK05182.2-2"/>
    <property type="match status" value="1"/>
</dbReference>
<dbReference type="NCBIfam" id="NF003519">
    <property type="entry name" value="PRK05182.2-5"/>
    <property type="match status" value="1"/>
</dbReference>
<dbReference type="NCBIfam" id="TIGR02027">
    <property type="entry name" value="rpoA"/>
    <property type="match status" value="1"/>
</dbReference>
<dbReference type="Pfam" id="PF01000">
    <property type="entry name" value="RNA_pol_A_bac"/>
    <property type="match status" value="1"/>
</dbReference>
<dbReference type="Pfam" id="PF03118">
    <property type="entry name" value="RNA_pol_A_CTD"/>
    <property type="match status" value="1"/>
</dbReference>
<dbReference type="Pfam" id="PF01193">
    <property type="entry name" value="RNA_pol_L"/>
    <property type="match status" value="1"/>
</dbReference>
<dbReference type="SMART" id="SM00662">
    <property type="entry name" value="RPOLD"/>
    <property type="match status" value="1"/>
</dbReference>
<dbReference type="SUPFAM" id="SSF47789">
    <property type="entry name" value="C-terminal domain of RNA polymerase alpha subunit"/>
    <property type="match status" value="1"/>
</dbReference>
<dbReference type="SUPFAM" id="SSF56553">
    <property type="entry name" value="Insert subdomain of RNA polymerase alpha subunit"/>
    <property type="match status" value="1"/>
</dbReference>
<dbReference type="SUPFAM" id="SSF55257">
    <property type="entry name" value="RBP11-like subunits of RNA polymerase"/>
    <property type="match status" value="1"/>
</dbReference>
<feature type="chain" id="PRO_0000296889" description="DNA-directed RNA polymerase subunit alpha">
    <location>
        <begin position="1"/>
        <end position="318"/>
    </location>
</feature>
<feature type="region of interest" description="Alpha N-terminal domain (alpha-NTD)" evidence="1">
    <location>
        <begin position="1"/>
        <end position="232"/>
    </location>
</feature>
<feature type="region of interest" description="Alpha C-terminal domain (alpha-CTD)" evidence="1">
    <location>
        <begin position="246"/>
        <end position="318"/>
    </location>
</feature>
<geneLocation type="chloroplast"/>
<evidence type="ECO:0000255" key="1">
    <source>
        <dbReference type="HAMAP-Rule" id="MF_00059"/>
    </source>
</evidence>
<comment type="function">
    <text evidence="1">DNA-dependent RNA polymerase catalyzes the transcription of DNA into RNA using the four ribonucleoside triphosphates as substrates.</text>
</comment>
<comment type="catalytic activity">
    <reaction evidence="1">
        <text>RNA(n) + a ribonucleoside 5'-triphosphate = RNA(n+1) + diphosphate</text>
        <dbReference type="Rhea" id="RHEA:21248"/>
        <dbReference type="Rhea" id="RHEA-COMP:14527"/>
        <dbReference type="Rhea" id="RHEA-COMP:17342"/>
        <dbReference type="ChEBI" id="CHEBI:33019"/>
        <dbReference type="ChEBI" id="CHEBI:61557"/>
        <dbReference type="ChEBI" id="CHEBI:140395"/>
        <dbReference type="EC" id="2.7.7.6"/>
    </reaction>
</comment>
<comment type="subunit">
    <text evidence="1">In plastids the minimal PEP RNA polymerase catalytic core is composed of four subunits: alpha, beta, beta', and beta''. When a (nuclear-encoded) sigma factor is associated with the core the holoenzyme is formed, which can initiate transcription.</text>
</comment>
<comment type="subcellular location">
    <subcellularLocation>
        <location>Plastid</location>
        <location>Chloroplast</location>
    </subcellularLocation>
</comment>
<comment type="domain">
    <text evidence="1">The N-terminal domain is essential for RNAP assembly and basal transcription, whereas the C-terminal domain is involved in interaction with transcriptional regulators and with upstream promoter elements.</text>
</comment>
<comment type="similarity">
    <text evidence="1">Belongs to the RNA polymerase alpha chain family.</text>
</comment>
<keyword id="KW-0150">Chloroplast</keyword>
<keyword id="KW-0240">DNA-directed RNA polymerase</keyword>
<keyword id="KW-0548">Nucleotidyltransferase</keyword>
<keyword id="KW-0934">Plastid</keyword>
<keyword id="KW-0804">Transcription</keyword>
<keyword id="KW-0808">Transferase</keyword>
<proteinExistence type="inferred from homology"/>
<accession>A2CI44</accession>
<sequence>MAHQRIVGPTIECIESRIESRRNHYGRFVIAPLEIGQGITVGNVFRRVLLGDLEGACITSVQIPGVNHEFSTIHGVREAVLDILLNLKEIVLKTQSQETQRGHLSVQGPSTVLARDLQLPSSIELVDPDQYIATISGRVSLNMEFTVEVGKGYQLPDYEKKKTFQVDVLPIDAVFMPVTKVNYTVEENYGGDRSQERVIIEVWTNGSINSRQAIDLSVNKIINLFSPLQNVRSIEHEPLVKEKDSKMTEVLVEELDLSVRAYNCLKRAQIHTVSDLLSYSQEDLLEIKNFGRRSAEEVIEGLQKRLGIHLPKEKFTKD</sequence>